<keyword id="KW-1185">Reference proteome</keyword>
<keyword id="KW-0687">Ribonucleoprotein</keyword>
<keyword id="KW-0689">Ribosomal protein</keyword>
<proteinExistence type="inferred from homology"/>
<dbReference type="EMBL" id="CP000034">
    <property type="protein sequence ID" value="ABB63475.1"/>
    <property type="molecule type" value="Genomic_DNA"/>
</dbReference>
<dbReference type="RefSeq" id="WP_001181004.1">
    <property type="nucleotide sequence ID" value="NC_007606.1"/>
</dbReference>
<dbReference type="RefSeq" id="YP_404966.1">
    <property type="nucleotide sequence ID" value="NC_007606.1"/>
</dbReference>
<dbReference type="SMR" id="Q32B30"/>
<dbReference type="STRING" id="300267.SDY_3497"/>
<dbReference type="EnsemblBacteria" id="ABB63475">
    <property type="protein sequence ID" value="ABB63475"/>
    <property type="gene ID" value="SDY_3497"/>
</dbReference>
<dbReference type="GeneID" id="93778666"/>
<dbReference type="KEGG" id="sdy:SDY_3497"/>
<dbReference type="PATRIC" id="fig|300267.13.peg.4150"/>
<dbReference type="HOGENOM" id="CLU_122625_1_3_6"/>
<dbReference type="Proteomes" id="UP000002716">
    <property type="component" value="Chromosome"/>
</dbReference>
<dbReference type="GO" id="GO:1990904">
    <property type="term" value="C:ribonucleoprotein complex"/>
    <property type="evidence" value="ECO:0007669"/>
    <property type="project" value="UniProtKB-KW"/>
</dbReference>
<dbReference type="GO" id="GO:0005840">
    <property type="term" value="C:ribosome"/>
    <property type="evidence" value="ECO:0007669"/>
    <property type="project" value="UniProtKB-KW"/>
</dbReference>
<dbReference type="GO" id="GO:0003735">
    <property type="term" value="F:structural constituent of ribosome"/>
    <property type="evidence" value="ECO:0007669"/>
    <property type="project" value="InterPro"/>
</dbReference>
<dbReference type="GO" id="GO:0000049">
    <property type="term" value="F:tRNA binding"/>
    <property type="evidence" value="ECO:0007669"/>
    <property type="project" value="UniProtKB-UniRule"/>
</dbReference>
<dbReference type="GO" id="GO:0006412">
    <property type="term" value="P:translation"/>
    <property type="evidence" value="ECO:0007669"/>
    <property type="project" value="UniProtKB-UniRule"/>
</dbReference>
<dbReference type="FunFam" id="3.30.70.600:FF:000001">
    <property type="entry name" value="30S ribosomal protein S10"/>
    <property type="match status" value="1"/>
</dbReference>
<dbReference type="Gene3D" id="3.30.70.600">
    <property type="entry name" value="Ribosomal protein S10 domain"/>
    <property type="match status" value="1"/>
</dbReference>
<dbReference type="HAMAP" id="MF_00508">
    <property type="entry name" value="Ribosomal_uS10"/>
    <property type="match status" value="1"/>
</dbReference>
<dbReference type="InterPro" id="IPR001848">
    <property type="entry name" value="Ribosomal_uS10"/>
</dbReference>
<dbReference type="InterPro" id="IPR018268">
    <property type="entry name" value="Ribosomal_uS10_CS"/>
</dbReference>
<dbReference type="InterPro" id="IPR027486">
    <property type="entry name" value="Ribosomal_uS10_dom"/>
</dbReference>
<dbReference type="InterPro" id="IPR036838">
    <property type="entry name" value="Ribosomal_uS10_dom_sf"/>
</dbReference>
<dbReference type="NCBIfam" id="NF001861">
    <property type="entry name" value="PRK00596.1"/>
    <property type="match status" value="1"/>
</dbReference>
<dbReference type="NCBIfam" id="TIGR01049">
    <property type="entry name" value="rpsJ_bact"/>
    <property type="match status" value="1"/>
</dbReference>
<dbReference type="PANTHER" id="PTHR11700">
    <property type="entry name" value="30S RIBOSOMAL PROTEIN S10 FAMILY MEMBER"/>
    <property type="match status" value="1"/>
</dbReference>
<dbReference type="Pfam" id="PF00338">
    <property type="entry name" value="Ribosomal_S10"/>
    <property type="match status" value="1"/>
</dbReference>
<dbReference type="PRINTS" id="PR00971">
    <property type="entry name" value="RIBOSOMALS10"/>
</dbReference>
<dbReference type="SMART" id="SM01403">
    <property type="entry name" value="Ribosomal_S10"/>
    <property type="match status" value="1"/>
</dbReference>
<dbReference type="SUPFAM" id="SSF54999">
    <property type="entry name" value="Ribosomal protein S10"/>
    <property type="match status" value="1"/>
</dbReference>
<dbReference type="PROSITE" id="PS00361">
    <property type="entry name" value="RIBOSOMAL_S10"/>
    <property type="match status" value="1"/>
</dbReference>
<organism>
    <name type="scientific">Shigella dysenteriae serotype 1 (strain Sd197)</name>
    <dbReference type="NCBI Taxonomy" id="300267"/>
    <lineage>
        <taxon>Bacteria</taxon>
        <taxon>Pseudomonadati</taxon>
        <taxon>Pseudomonadota</taxon>
        <taxon>Gammaproteobacteria</taxon>
        <taxon>Enterobacterales</taxon>
        <taxon>Enterobacteriaceae</taxon>
        <taxon>Shigella</taxon>
    </lineage>
</organism>
<comment type="function">
    <text evidence="1">Involved in the binding of tRNA to the ribosomes.</text>
</comment>
<comment type="subunit">
    <text evidence="1">Part of the 30S ribosomal subunit.</text>
</comment>
<comment type="similarity">
    <text evidence="1">Belongs to the universal ribosomal protein uS10 family.</text>
</comment>
<name>RS10_SHIDS</name>
<reference key="1">
    <citation type="journal article" date="2005" name="Nucleic Acids Res.">
        <title>Genome dynamics and diversity of Shigella species, the etiologic agents of bacillary dysentery.</title>
        <authorList>
            <person name="Yang F."/>
            <person name="Yang J."/>
            <person name="Zhang X."/>
            <person name="Chen L."/>
            <person name="Jiang Y."/>
            <person name="Yan Y."/>
            <person name="Tang X."/>
            <person name="Wang J."/>
            <person name="Xiong Z."/>
            <person name="Dong J."/>
            <person name="Xue Y."/>
            <person name="Zhu Y."/>
            <person name="Xu X."/>
            <person name="Sun L."/>
            <person name="Chen S."/>
            <person name="Nie H."/>
            <person name="Peng J."/>
            <person name="Xu J."/>
            <person name="Wang Y."/>
            <person name="Yuan Z."/>
            <person name="Wen Y."/>
            <person name="Yao Z."/>
            <person name="Shen Y."/>
            <person name="Qiang B."/>
            <person name="Hou Y."/>
            <person name="Yu J."/>
            <person name="Jin Q."/>
        </authorList>
    </citation>
    <scope>NUCLEOTIDE SEQUENCE [LARGE SCALE GENOMIC DNA]</scope>
    <source>
        <strain>Sd197</strain>
    </source>
</reference>
<accession>Q32B30</accession>
<protein>
    <recommendedName>
        <fullName evidence="1">Small ribosomal subunit protein uS10</fullName>
    </recommendedName>
    <alternativeName>
        <fullName evidence="2">30S ribosomal protein S10</fullName>
    </alternativeName>
</protein>
<feature type="chain" id="PRO_0000237094" description="Small ribosomal subunit protein uS10">
    <location>
        <begin position="1"/>
        <end position="103"/>
    </location>
</feature>
<evidence type="ECO:0000255" key="1">
    <source>
        <dbReference type="HAMAP-Rule" id="MF_00508"/>
    </source>
</evidence>
<evidence type="ECO:0000305" key="2"/>
<gene>
    <name evidence="1" type="primary">rpsJ</name>
    <name type="ordered locus">SDY_3497</name>
</gene>
<sequence length="103" mass="11736">MQNQRIRIRLKAFDHRLIDQATAEIVETAKRTGAQVRGPIPLPTRKERFTVLISPHVNKDARDQYEIRTHLRLVDIVEPTEKTVDALMRLDLAAGVDVQISLG</sequence>